<dbReference type="EC" id="6.2.1.1" evidence="1"/>
<dbReference type="EMBL" id="CP000151">
    <property type="protein sequence ID" value="ABB09114.1"/>
    <property type="molecule type" value="Genomic_DNA"/>
</dbReference>
<dbReference type="RefSeq" id="WP_011352648.1">
    <property type="nucleotide sequence ID" value="NC_007510.1"/>
</dbReference>
<dbReference type="SMR" id="Q39EK2"/>
<dbReference type="GeneID" id="45095402"/>
<dbReference type="KEGG" id="bur:Bcep18194_A5520"/>
<dbReference type="PATRIC" id="fig|482957.22.peg.2480"/>
<dbReference type="HOGENOM" id="CLU_000022_3_6_4"/>
<dbReference type="Proteomes" id="UP000002705">
    <property type="component" value="Chromosome 1"/>
</dbReference>
<dbReference type="GO" id="GO:0005829">
    <property type="term" value="C:cytosol"/>
    <property type="evidence" value="ECO:0007669"/>
    <property type="project" value="TreeGrafter"/>
</dbReference>
<dbReference type="GO" id="GO:0003987">
    <property type="term" value="F:acetate-CoA ligase activity"/>
    <property type="evidence" value="ECO:0007669"/>
    <property type="project" value="UniProtKB-UniRule"/>
</dbReference>
<dbReference type="GO" id="GO:0016208">
    <property type="term" value="F:AMP binding"/>
    <property type="evidence" value="ECO:0007669"/>
    <property type="project" value="InterPro"/>
</dbReference>
<dbReference type="GO" id="GO:0005524">
    <property type="term" value="F:ATP binding"/>
    <property type="evidence" value="ECO:0007669"/>
    <property type="project" value="UniProtKB-KW"/>
</dbReference>
<dbReference type="GO" id="GO:0046872">
    <property type="term" value="F:metal ion binding"/>
    <property type="evidence" value="ECO:0007669"/>
    <property type="project" value="UniProtKB-KW"/>
</dbReference>
<dbReference type="GO" id="GO:0019427">
    <property type="term" value="P:acetyl-CoA biosynthetic process from acetate"/>
    <property type="evidence" value="ECO:0007669"/>
    <property type="project" value="InterPro"/>
</dbReference>
<dbReference type="CDD" id="cd05966">
    <property type="entry name" value="ACS"/>
    <property type="match status" value="1"/>
</dbReference>
<dbReference type="FunFam" id="3.40.50.12780:FF:000001">
    <property type="entry name" value="Acetyl-coenzyme A synthetase"/>
    <property type="match status" value="1"/>
</dbReference>
<dbReference type="Gene3D" id="3.30.300.30">
    <property type="match status" value="1"/>
</dbReference>
<dbReference type="Gene3D" id="3.40.50.12780">
    <property type="entry name" value="N-terminal domain of ligase-like"/>
    <property type="match status" value="1"/>
</dbReference>
<dbReference type="HAMAP" id="MF_01123">
    <property type="entry name" value="Ac_CoA_synth"/>
    <property type="match status" value="1"/>
</dbReference>
<dbReference type="InterPro" id="IPR011904">
    <property type="entry name" value="Ac_CoA_lig"/>
</dbReference>
<dbReference type="InterPro" id="IPR032387">
    <property type="entry name" value="ACAS_N"/>
</dbReference>
<dbReference type="InterPro" id="IPR025110">
    <property type="entry name" value="AMP-bd_C"/>
</dbReference>
<dbReference type="InterPro" id="IPR045851">
    <property type="entry name" value="AMP-bd_C_sf"/>
</dbReference>
<dbReference type="InterPro" id="IPR020845">
    <property type="entry name" value="AMP-binding_CS"/>
</dbReference>
<dbReference type="InterPro" id="IPR000873">
    <property type="entry name" value="AMP-dep_synth/lig_dom"/>
</dbReference>
<dbReference type="InterPro" id="IPR042099">
    <property type="entry name" value="ANL_N_sf"/>
</dbReference>
<dbReference type="NCBIfam" id="TIGR02188">
    <property type="entry name" value="Ac_CoA_lig_AcsA"/>
    <property type="match status" value="1"/>
</dbReference>
<dbReference type="NCBIfam" id="NF001208">
    <property type="entry name" value="PRK00174.1"/>
    <property type="match status" value="1"/>
</dbReference>
<dbReference type="PANTHER" id="PTHR24095">
    <property type="entry name" value="ACETYL-COENZYME A SYNTHETASE"/>
    <property type="match status" value="1"/>
</dbReference>
<dbReference type="PANTHER" id="PTHR24095:SF14">
    <property type="entry name" value="ACETYL-COENZYME A SYNTHETASE 1"/>
    <property type="match status" value="1"/>
</dbReference>
<dbReference type="Pfam" id="PF16177">
    <property type="entry name" value="ACAS_N"/>
    <property type="match status" value="1"/>
</dbReference>
<dbReference type="Pfam" id="PF00501">
    <property type="entry name" value="AMP-binding"/>
    <property type="match status" value="1"/>
</dbReference>
<dbReference type="Pfam" id="PF13193">
    <property type="entry name" value="AMP-binding_C"/>
    <property type="match status" value="1"/>
</dbReference>
<dbReference type="SUPFAM" id="SSF56801">
    <property type="entry name" value="Acetyl-CoA synthetase-like"/>
    <property type="match status" value="1"/>
</dbReference>
<dbReference type="PROSITE" id="PS00455">
    <property type="entry name" value="AMP_BINDING"/>
    <property type="match status" value="1"/>
</dbReference>
<name>ACSA_BURL3</name>
<proteinExistence type="inferred from homology"/>
<sequence length="660" mass="72195">MSAIESVLHETRQFAPPAALEQAATISGMPAYRALAAEAENDYEGFWARLAREGLAWHKPFTKVLDESNAPFYKWFEDGELNASYNCLDRHVEAGNGERVAVIFEADDGTVTRVTYADLLARVSRFANALKKRGIGKGDRVVIYIPMSIEGIVAMQACARIGATHSVVFGGFSAKSLNERLVDVGATALITADEQARGGKTLPLKSIADEAIALGGCEAVKSVIVYRRTGGKIDWHAERDLWMHELTAGESDQCEPEWVGAEHPLFILYTSGSTGKPKGVQHSTGGYLLWAAQTMKWTFDWKPTDVFWCTADIGWVTGHTYITYGPLACGGTQVVFEGVPTYPDAGRFWKMIGDHKVTVFYTAPTAIRSLIKAAEADDKVHPKSYDLSSLRIIGTVGEPINPEAWMWYHKHVGQERCPIVDTWWQTETGGHMITPLPGATPTVPGSCTLPLPGIMAAVVDETGQDVPNGQGGILVVKRPWPAMIRTIWGDPERFKKSYYPEELGGRLYLAGDGTVRDKDTGYFTIMGRIDDVLNVSGHRLGTMEIESALVSHELVAEAAVVGRPDDTTGEAVVAFVVLKRSRPEGEEAAALAKTLRDWVGKQIGPIAKPKDIRFGDNLPKTRSGKIMRRLLRSLAKGEAITQDTSTLENPAILDQLAEVR</sequence>
<keyword id="KW-0007">Acetylation</keyword>
<keyword id="KW-0067">ATP-binding</keyword>
<keyword id="KW-0436">Ligase</keyword>
<keyword id="KW-0460">Magnesium</keyword>
<keyword id="KW-0479">Metal-binding</keyword>
<keyword id="KW-0547">Nucleotide-binding</keyword>
<evidence type="ECO:0000255" key="1">
    <source>
        <dbReference type="HAMAP-Rule" id="MF_01123"/>
    </source>
</evidence>
<feature type="chain" id="PRO_1000065285" description="Acetyl-coenzyme A synthetase">
    <location>
        <begin position="1"/>
        <end position="660"/>
    </location>
</feature>
<feature type="binding site" evidence="1">
    <location>
        <begin position="197"/>
        <end position="200"/>
    </location>
    <ligand>
        <name>CoA</name>
        <dbReference type="ChEBI" id="CHEBI:57287"/>
    </ligand>
</feature>
<feature type="binding site" evidence="1">
    <location>
        <position position="317"/>
    </location>
    <ligand>
        <name>CoA</name>
        <dbReference type="ChEBI" id="CHEBI:57287"/>
    </ligand>
</feature>
<feature type="binding site" evidence="1">
    <location>
        <begin position="397"/>
        <end position="399"/>
    </location>
    <ligand>
        <name>ATP</name>
        <dbReference type="ChEBI" id="CHEBI:30616"/>
    </ligand>
</feature>
<feature type="binding site" evidence="1">
    <location>
        <begin position="421"/>
        <end position="426"/>
    </location>
    <ligand>
        <name>ATP</name>
        <dbReference type="ChEBI" id="CHEBI:30616"/>
    </ligand>
</feature>
<feature type="binding site" evidence="1">
    <location>
        <position position="512"/>
    </location>
    <ligand>
        <name>ATP</name>
        <dbReference type="ChEBI" id="CHEBI:30616"/>
    </ligand>
</feature>
<feature type="binding site" evidence="1">
    <location>
        <position position="528"/>
    </location>
    <ligand>
        <name>ATP</name>
        <dbReference type="ChEBI" id="CHEBI:30616"/>
    </ligand>
</feature>
<feature type="binding site" evidence="1">
    <location>
        <position position="536"/>
    </location>
    <ligand>
        <name>CoA</name>
        <dbReference type="ChEBI" id="CHEBI:57287"/>
    </ligand>
</feature>
<feature type="binding site" evidence="1">
    <location>
        <position position="539"/>
    </location>
    <ligand>
        <name>ATP</name>
        <dbReference type="ChEBI" id="CHEBI:30616"/>
    </ligand>
</feature>
<feature type="binding site" evidence="1">
    <location>
        <position position="550"/>
    </location>
    <ligand>
        <name>Mg(2+)</name>
        <dbReference type="ChEBI" id="CHEBI:18420"/>
    </ligand>
</feature>
<feature type="binding site" evidence="1">
    <location>
        <position position="552"/>
    </location>
    <ligand>
        <name>Mg(2+)</name>
        <dbReference type="ChEBI" id="CHEBI:18420"/>
    </ligand>
</feature>
<feature type="binding site" evidence="1">
    <location>
        <position position="555"/>
    </location>
    <ligand>
        <name>Mg(2+)</name>
        <dbReference type="ChEBI" id="CHEBI:18420"/>
    </ligand>
</feature>
<feature type="modified residue" description="N6-acetyllysine" evidence="1">
    <location>
        <position position="625"/>
    </location>
</feature>
<protein>
    <recommendedName>
        <fullName evidence="1">Acetyl-coenzyme A synthetase</fullName>
        <shortName evidence="1">AcCoA synthetase</shortName>
        <shortName evidence="1">Acs</shortName>
        <ecNumber evidence="1">6.2.1.1</ecNumber>
    </recommendedName>
    <alternativeName>
        <fullName evidence="1">Acetate--CoA ligase</fullName>
    </alternativeName>
    <alternativeName>
        <fullName evidence="1">Acyl-activating enzyme</fullName>
    </alternativeName>
</protein>
<comment type="function">
    <text evidence="1">Catalyzes the conversion of acetate into acetyl-CoA (AcCoA), an essential intermediate at the junction of anabolic and catabolic pathways. AcsA undergoes a two-step reaction. In the first half reaction, AcsA combines acetate with ATP to form acetyl-adenylate (AcAMP) intermediate. In the second half reaction, it can then transfer the acetyl group from AcAMP to the sulfhydryl group of CoA, forming the product AcCoA.</text>
</comment>
<comment type="catalytic activity">
    <reaction evidence="1">
        <text>acetate + ATP + CoA = acetyl-CoA + AMP + diphosphate</text>
        <dbReference type="Rhea" id="RHEA:23176"/>
        <dbReference type="ChEBI" id="CHEBI:30089"/>
        <dbReference type="ChEBI" id="CHEBI:30616"/>
        <dbReference type="ChEBI" id="CHEBI:33019"/>
        <dbReference type="ChEBI" id="CHEBI:57287"/>
        <dbReference type="ChEBI" id="CHEBI:57288"/>
        <dbReference type="ChEBI" id="CHEBI:456215"/>
        <dbReference type="EC" id="6.2.1.1"/>
    </reaction>
</comment>
<comment type="cofactor">
    <cofactor evidence="1">
        <name>Mg(2+)</name>
        <dbReference type="ChEBI" id="CHEBI:18420"/>
    </cofactor>
</comment>
<comment type="PTM">
    <text evidence="1">Acetylated. Deacetylation by the SIR2-homolog deacetylase activates the enzyme.</text>
</comment>
<comment type="similarity">
    <text evidence="1">Belongs to the ATP-dependent AMP-binding enzyme family.</text>
</comment>
<reference key="1">
    <citation type="submission" date="2005-10" db="EMBL/GenBank/DDBJ databases">
        <title>Complete sequence of chromosome 1 of Burkholderia sp. 383.</title>
        <authorList>
            <consortium name="US DOE Joint Genome Institute"/>
            <person name="Copeland A."/>
            <person name="Lucas S."/>
            <person name="Lapidus A."/>
            <person name="Barry K."/>
            <person name="Detter J.C."/>
            <person name="Glavina T."/>
            <person name="Hammon N."/>
            <person name="Israni S."/>
            <person name="Pitluck S."/>
            <person name="Chain P."/>
            <person name="Malfatti S."/>
            <person name="Shin M."/>
            <person name="Vergez L."/>
            <person name="Schmutz J."/>
            <person name="Larimer F."/>
            <person name="Land M."/>
            <person name="Kyrpides N."/>
            <person name="Lykidis A."/>
            <person name="Richardson P."/>
        </authorList>
    </citation>
    <scope>NUCLEOTIDE SEQUENCE [LARGE SCALE GENOMIC DNA]</scope>
    <source>
        <strain>ATCC 17760 / DSM 23089 / LMG 22485 / NCIMB 9086 / R18194 / 383</strain>
    </source>
</reference>
<organism>
    <name type="scientific">Burkholderia lata (strain ATCC 17760 / DSM 23089 / LMG 22485 / NCIMB 9086 / R18194 / 383)</name>
    <dbReference type="NCBI Taxonomy" id="482957"/>
    <lineage>
        <taxon>Bacteria</taxon>
        <taxon>Pseudomonadati</taxon>
        <taxon>Pseudomonadota</taxon>
        <taxon>Betaproteobacteria</taxon>
        <taxon>Burkholderiales</taxon>
        <taxon>Burkholderiaceae</taxon>
        <taxon>Burkholderia</taxon>
        <taxon>Burkholderia cepacia complex</taxon>
    </lineage>
</organism>
<gene>
    <name evidence="1" type="primary">acsA</name>
    <name type="ordered locus">Bcep18194_A5520</name>
</gene>
<accession>Q39EK2</accession>